<dbReference type="EC" id="5.3.1.16" evidence="1"/>
<dbReference type="EMBL" id="CP000083">
    <property type="protein sequence ID" value="AAZ24080.1"/>
    <property type="molecule type" value="Genomic_DNA"/>
</dbReference>
<dbReference type="RefSeq" id="WP_011044642.1">
    <property type="nucleotide sequence ID" value="NC_003910.7"/>
</dbReference>
<dbReference type="SMR" id="Q47XB4"/>
<dbReference type="STRING" id="167879.CPS_3894"/>
<dbReference type="KEGG" id="cps:CPS_3894"/>
<dbReference type="eggNOG" id="COG0106">
    <property type="taxonomic scope" value="Bacteria"/>
</dbReference>
<dbReference type="HOGENOM" id="CLU_048577_1_2_6"/>
<dbReference type="UniPathway" id="UPA00031">
    <property type="reaction ID" value="UER00009"/>
</dbReference>
<dbReference type="Proteomes" id="UP000000547">
    <property type="component" value="Chromosome"/>
</dbReference>
<dbReference type="GO" id="GO:0005737">
    <property type="term" value="C:cytoplasm"/>
    <property type="evidence" value="ECO:0007669"/>
    <property type="project" value="UniProtKB-SubCell"/>
</dbReference>
<dbReference type="GO" id="GO:0003949">
    <property type="term" value="F:1-(5-phosphoribosyl)-5-[(5-phosphoribosylamino)methylideneamino]imidazole-4-carboxamide isomerase activity"/>
    <property type="evidence" value="ECO:0007669"/>
    <property type="project" value="UniProtKB-UniRule"/>
</dbReference>
<dbReference type="GO" id="GO:0000105">
    <property type="term" value="P:L-histidine biosynthetic process"/>
    <property type="evidence" value="ECO:0007669"/>
    <property type="project" value="UniProtKB-UniRule"/>
</dbReference>
<dbReference type="GO" id="GO:0000162">
    <property type="term" value="P:L-tryptophan biosynthetic process"/>
    <property type="evidence" value="ECO:0007669"/>
    <property type="project" value="TreeGrafter"/>
</dbReference>
<dbReference type="CDD" id="cd04732">
    <property type="entry name" value="HisA"/>
    <property type="match status" value="1"/>
</dbReference>
<dbReference type="FunFam" id="3.20.20.70:FF:000009">
    <property type="entry name" value="1-(5-phosphoribosyl)-5-[(5-phosphoribosylamino)methylideneamino] imidazole-4-carboxamide isomerase"/>
    <property type="match status" value="1"/>
</dbReference>
<dbReference type="Gene3D" id="3.20.20.70">
    <property type="entry name" value="Aldolase class I"/>
    <property type="match status" value="1"/>
</dbReference>
<dbReference type="HAMAP" id="MF_01014">
    <property type="entry name" value="HisA"/>
    <property type="match status" value="1"/>
</dbReference>
<dbReference type="InterPro" id="IPR013785">
    <property type="entry name" value="Aldolase_TIM"/>
</dbReference>
<dbReference type="InterPro" id="IPR006062">
    <property type="entry name" value="His_biosynth"/>
</dbReference>
<dbReference type="InterPro" id="IPR006063">
    <property type="entry name" value="HisA_bact_arch"/>
</dbReference>
<dbReference type="InterPro" id="IPR044524">
    <property type="entry name" value="Isoase_HisA-like"/>
</dbReference>
<dbReference type="InterPro" id="IPR023016">
    <property type="entry name" value="Isoase_HisA-like_bact"/>
</dbReference>
<dbReference type="InterPro" id="IPR011060">
    <property type="entry name" value="RibuloseP-bd_barrel"/>
</dbReference>
<dbReference type="NCBIfam" id="TIGR00007">
    <property type="entry name" value="1-(5-phosphoribosyl)-5-[(5-phosphoribosylamino)methylideneamino]imidazole-4-carboxamide isomerase"/>
    <property type="match status" value="1"/>
</dbReference>
<dbReference type="PANTHER" id="PTHR43090">
    <property type="entry name" value="1-(5-PHOSPHORIBOSYL)-5-[(5-PHOSPHORIBOSYLAMINO)METHYLIDENEAMINO] IMIDAZOLE-4-CARBOXAMIDE ISOMERASE"/>
    <property type="match status" value="1"/>
</dbReference>
<dbReference type="PANTHER" id="PTHR43090:SF2">
    <property type="entry name" value="1-(5-PHOSPHORIBOSYL)-5-[(5-PHOSPHORIBOSYLAMINO)METHYLIDENEAMINO] IMIDAZOLE-4-CARBOXAMIDE ISOMERASE"/>
    <property type="match status" value="1"/>
</dbReference>
<dbReference type="Pfam" id="PF00977">
    <property type="entry name" value="His_biosynth"/>
    <property type="match status" value="1"/>
</dbReference>
<dbReference type="SUPFAM" id="SSF51366">
    <property type="entry name" value="Ribulose-phoshate binding barrel"/>
    <property type="match status" value="1"/>
</dbReference>
<gene>
    <name evidence="1" type="primary">hisA</name>
    <name type="ordered locus">CPS_3894</name>
</gene>
<keyword id="KW-0028">Amino-acid biosynthesis</keyword>
<keyword id="KW-0963">Cytoplasm</keyword>
<keyword id="KW-0368">Histidine biosynthesis</keyword>
<keyword id="KW-0413">Isomerase</keyword>
<protein>
    <recommendedName>
        <fullName evidence="1">1-(5-phosphoribosyl)-5-[(5-phosphoribosylamino)methylideneamino] imidazole-4-carboxamide isomerase</fullName>
        <ecNumber evidence="1">5.3.1.16</ecNumber>
    </recommendedName>
    <alternativeName>
        <fullName evidence="1">Phosphoribosylformimino-5-aminoimidazole carboxamide ribotide isomerase</fullName>
    </alternativeName>
</protein>
<proteinExistence type="inferred from homology"/>
<comment type="catalytic activity">
    <reaction evidence="1">
        <text>1-(5-phospho-beta-D-ribosyl)-5-[(5-phospho-beta-D-ribosylamino)methylideneamino]imidazole-4-carboxamide = 5-[(5-phospho-1-deoxy-D-ribulos-1-ylimino)methylamino]-1-(5-phospho-beta-D-ribosyl)imidazole-4-carboxamide</text>
        <dbReference type="Rhea" id="RHEA:15469"/>
        <dbReference type="ChEBI" id="CHEBI:58435"/>
        <dbReference type="ChEBI" id="CHEBI:58525"/>
        <dbReference type="EC" id="5.3.1.16"/>
    </reaction>
</comment>
<comment type="pathway">
    <text evidence="1">Amino-acid biosynthesis; L-histidine biosynthesis; L-histidine from 5-phospho-alpha-D-ribose 1-diphosphate: step 4/9.</text>
</comment>
<comment type="subcellular location">
    <subcellularLocation>
        <location evidence="1">Cytoplasm</location>
    </subcellularLocation>
</comment>
<comment type="similarity">
    <text evidence="1">Belongs to the HisA/HisF family.</text>
</comment>
<sequence>MMIPAIDLIGGEVVRLYQGDYAQKTNYQYTVQDRQQAYAESGATVMHFVDLDGAKDSTKRQLKTLKTVVNHPSMIIQVGGGVRCEDDVKQLLALGADRVVIGSLAIKQPELVTQWVKTYGCEKIVLALDIKIDAQGNKTLPTHGWIEDSGVNLEDLLAQYQDAGIKHVLCTDISKDGTLTGTNVDLYSEVCAKYPDIDWQASGGIGSLADIKALIPTGVSGVILGRSLLEGKFTLEEAIACWPKTSANNAESNTSSNTGDK</sequence>
<evidence type="ECO:0000255" key="1">
    <source>
        <dbReference type="HAMAP-Rule" id="MF_01014"/>
    </source>
</evidence>
<reference key="1">
    <citation type="journal article" date="2005" name="Proc. Natl. Acad. Sci. U.S.A.">
        <title>The psychrophilic lifestyle as revealed by the genome sequence of Colwellia psychrerythraea 34H through genomic and proteomic analyses.</title>
        <authorList>
            <person name="Methe B.A."/>
            <person name="Nelson K.E."/>
            <person name="Deming J.W."/>
            <person name="Momen B."/>
            <person name="Melamud E."/>
            <person name="Zhang X."/>
            <person name="Moult J."/>
            <person name="Madupu R."/>
            <person name="Nelson W.C."/>
            <person name="Dodson R.J."/>
            <person name="Brinkac L.M."/>
            <person name="Daugherty S.C."/>
            <person name="Durkin A.S."/>
            <person name="DeBoy R.T."/>
            <person name="Kolonay J.F."/>
            <person name="Sullivan S.A."/>
            <person name="Zhou L."/>
            <person name="Davidsen T.M."/>
            <person name="Wu M."/>
            <person name="Huston A.L."/>
            <person name="Lewis M."/>
            <person name="Weaver B."/>
            <person name="Weidman J.F."/>
            <person name="Khouri H."/>
            <person name="Utterback T.R."/>
            <person name="Feldblyum T.V."/>
            <person name="Fraser C.M."/>
        </authorList>
    </citation>
    <scope>NUCLEOTIDE SEQUENCE [LARGE SCALE GENOMIC DNA]</scope>
    <source>
        <strain>34H / ATCC BAA-681</strain>
    </source>
</reference>
<accession>Q47XB4</accession>
<feature type="chain" id="PRO_0000229051" description="1-(5-phosphoribosyl)-5-[(5-phosphoribosylamino)methylideneamino] imidazole-4-carboxamide isomerase">
    <location>
        <begin position="1"/>
        <end position="261"/>
    </location>
</feature>
<feature type="active site" description="Proton acceptor" evidence="1">
    <location>
        <position position="7"/>
    </location>
</feature>
<feature type="active site" description="Proton donor" evidence="1">
    <location>
        <position position="129"/>
    </location>
</feature>
<organism>
    <name type="scientific">Colwellia psychrerythraea (strain 34H / ATCC BAA-681)</name>
    <name type="common">Vibrio psychroerythus</name>
    <dbReference type="NCBI Taxonomy" id="167879"/>
    <lineage>
        <taxon>Bacteria</taxon>
        <taxon>Pseudomonadati</taxon>
        <taxon>Pseudomonadota</taxon>
        <taxon>Gammaproteobacteria</taxon>
        <taxon>Alteromonadales</taxon>
        <taxon>Colwelliaceae</taxon>
        <taxon>Colwellia</taxon>
    </lineage>
</organism>
<name>HIS4_COLP3</name>